<name>ACPS_RICB8</name>
<proteinExistence type="inferred from homology"/>
<organism>
    <name type="scientific">Rickettsia bellii (strain OSU 85-389)</name>
    <dbReference type="NCBI Taxonomy" id="391896"/>
    <lineage>
        <taxon>Bacteria</taxon>
        <taxon>Pseudomonadati</taxon>
        <taxon>Pseudomonadota</taxon>
        <taxon>Alphaproteobacteria</taxon>
        <taxon>Rickettsiales</taxon>
        <taxon>Rickettsiaceae</taxon>
        <taxon>Rickettsieae</taxon>
        <taxon>Rickettsia</taxon>
        <taxon>belli group</taxon>
    </lineage>
</organism>
<dbReference type="EC" id="2.7.8.7" evidence="1"/>
<dbReference type="EMBL" id="CP000849">
    <property type="protein sequence ID" value="ABV79092.1"/>
    <property type="molecule type" value="Genomic_DNA"/>
</dbReference>
<dbReference type="RefSeq" id="WP_011477653.1">
    <property type="nucleotide sequence ID" value="NC_009883.1"/>
</dbReference>
<dbReference type="SMR" id="A8GW65"/>
<dbReference type="KEGG" id="rbo:A1I_03695"/>
<dbReference type="HOGENOM" id="CLU_089696_3_1_5"/>
<dbReference type="GO" id="GO:0005737">
    <property type="term" value="C:cytoplasm"/>
    <property type="evidence" value="ECO:0007669"/>
    <property type="project" value="UniProtKB-SubCell"/>
</dbReference>
<dbReference type="GO" id="GO:0008897">
    <property type="term" value="F:holo-[acyl-carrier-protein] synthase activity"/>
    <property type="evidence" value="ECO:0007669"/>
    <property type="project" value="UniProtKB-UniRule"/>
</dbReference>
<dbReference type="GO" id="GO:0000287">
    <property type="term" value="F:magnesium ion binding"/>
    <property type="evidence" value="ECO:0007669"/>
    <property type="project" value="UniProtKB-UniRule"/>
</dbReference>
<dbReference type="GO" id="GO:0006633">
    <property type="term" value="P:fatty acid biosynthetic process"/>
    <property type="evidence" value="ECO:0007669"/>
    <property type="project" value="UniProtKB-UniRule"/>
</dbReference>
<dbReference type="Gene3D" id="3.90.470.20">
    <property type="entry name" value="4'-phosphopantetheinyl transferase domain"/>
    <property type="match status" value="1"/>
</dbReference>
<dbReference type="HAMAP" id="MF_00101">
    <property type="entry name" value="AcpS"/>
    <property type="match status" value="1"/>
</dbReference>
<dbReference type="InterPro" id="IPR008278">
    <property type="entry name" value="4-PPantetheinyl_Trfase_dom"/>
</dbReference>
<dbReference type="InterPro" id="IPR037143">
    <property type="entry name" value="4-PPantetheinyl_Trfase_dom_sf"/>
</dbReference>
<dbReference type="InterPro" id="IPR002582">
    <property type="entry name" value="ACPS"/>
</dbReference>
<dbReference type="InterPro" id="IPR004568">
    <property type="entry name" value="Ppantetheine-prot_Trfase_dom"/>
</dbReference>
<dbReference type="NCBIfam" id="TIGR00516">
    <property type="entry name" value="acpS"/>
    <property type="match status" value="1"/>
</dbReference>
<dbReference type="NCBIfam" id="TIGR00556">
    <property type="entry name" value="pantethn_trn"/>
    <property type="match status" value="1"/>
</dbReference>
<dbReference type="Pfam" id="PF01648">
    <property type="entry name" value="ACPS"/>
    <property type="match status" value="1"/>
</dbReference>
<dbReference type="SUPFAM" id="SSF56214">
    <property type="entry name" value="4'-phosphopantetheinyl transferase"/>
    <property type="match status" value="1"/>
</dbReference>
<sequence length="127" mass="14321">MIIGVGTDIVQIPRIEKIIKLYPEIFPKRILNTEELKKFALLKKESHVTFLAKRFAAKEAISKAFGVGIGRGINFKDITLLNDELGKPIVKIDSLYTQKLPPFNIHLSLSDDYPICVAFVVVEKIIL</sequence>
<keyword id="KW-0963">Cytoplasm</keyword>
<keyword id="KW-0275">Fatty acid biosynthesis</keyword>
<keyword id="KW-0276">Fatty acid metabolism</keyword>
<keyword id="KW-0444">Lipid biosynthesis</keyword>
<keyword id="KW-0443">Lipid metabolism</keyword>
<keyword id="KW-0460">Magnesium</keyword>
<keyword id="KW-0479">Metal-binding</keyword>
<keyword id="KW-0808">Transferase</keyword>
<accession>A8GW65</accession>
<gene>
    <name evidence="1" type="primary">acpS</name>
    <name type="ordered locus">A1I_03695</name>
</gene>
<feature type="chain" id="PRO_1000008484" description="Holo-[acyl-carrier-protein] synthase">
    <location>
        <begin position="1"/>
        <end position="127"/>
    </location>
</feature>
<feature type="binding site" evidence="1">
    <location>
        <position position="8"/>
    </location>
    <ligand>
        <name>Mg(2+)</name>
        <dbReference type="ChEBI" id="CHEBI:18420"/>
    </ligand>
</feature>
<feature type="binding site" evidence="1">
    <location>
        <position position="59"/>
    </location>
    <ligand>
        <name>Mg(2+)</name>
        <dbReference type="ChEBI" id="CHEBI:18420"/>
    </ligand>
</feature>
<reference key="1">
    <citation type="submission" date="2007-09" db="EMBL/GenBank/DDBJ databases">
        <title>Complete genome sequencing of Rickettsia bellii.</title>
        <authorList>
            <person name="Madan A."/>
            <person name="Lee H."/>
            <person name="Madan A."/>
            <person name="Yoon J.-G."/>
            <person name="Ryu G.-Y."/>
            <person name="Dasch G."/>
            <person name="Ereemeva M."/>
        </authorList>
    </citation>
    <scope>NUCLEOTIDE SEQUENCE [LARGE SCALE GENOMIC DNA]</scope>
    <source>
        <strain>OSU 85-389</strain>
    </source>
</reference>
<evidence type="ECO:0000255" key="1">
    <source>
        <dbReference type="HAMAP-Rule" id="MF_00101"/>
    </source>
</evidence>
<comment type="function">
    <text evidence="1">Transfers the 4'-phosphopantetheine moiety from coenzyme A to a Ser of acyl-carrier-protein.</text>
</comment>
<comment type="catalytic activity">
    <reaction evidence="1">
        <text>apo-[ACP] + CoA = holo-[ACP] + adenosine 3',5'-bisphosphate + H(+)</text>
        <dbReference type="Rhea" id="RHEA:12068"/>
        <dbReference type="Rhea" id="RHEA-COMP:9685"/>
        <dbReference type="Rhea" id="RHEA-COMP:9690"/>
        <dbReference type="ChEBI" id="CHEBI:15378"/>
        <dbReference type="ChEBI" id="CHEBI:29999"/>
        <dbReference type="ChEBI" id="CHEBI:57287"/>
        <dbReference type="ChEBI" id="CHEBI:58343"/>
        <dbReference type="ChEBI" id="CHEBI:64479"/>
        <dbReference type="EC" id="2.7.8.7"/>
    </reaction>
</comment>
<comment type="cofactor">
    <cofactor evidence="1">
        <name>Mg(2+)</name>
        <dbReference type="ChEBI" id="CHEBI:18420"/>
    </cofactor>
</comment>
<comment type="subcellular location">
    <subcellularLocation>
        <location evidence="1">Cytoplasm</location>
    </subcellularLocation>
</comment>
<comment type="similarity">
    <text evidence="1">Belongs to the P-Pant transferase superfamily. AcpS family.</text>
</comment>
<protein>
    <recommendedName>
        <fullName evidence="1">Holo-[acyl-carrier-protein] synthase</fullName>
        <shortName evidence="1">Holo-ACP synthase</shortName>
        <ecNumber evidence="1">2.7.8.7</ecNumber>
    </recommendedName>
    <alternativeName>
        <fullName evidence="1">4'-phosphopantetheinyl transferase AcpS</fullName>
    </alternativeName>
</protein>